<sequence>MSAPTKPHSPTFKPEPHSAANEPKHPAARPKHVALQQLTGAQAVIRSLEELGVDVIFGIPGGAVLPVYDPLFDSKKLRHVLVRHEQGAGHAASGYAHVTGRVGVCMATSGPGATNLVTPLADAQMDSIPVVAITGQVGRGLIGTDAFQEADISGITMPITKHNFLVRSGDDIPRVLAEAFHIAASGRPGAVLVDIPKDVLQGQCTFSWPPRMELPGYKPNTKPHSRQVREAAKLIAAARKPVLYVGGGVIRGEATEQLRELAELTGIPVVTTLMARGAFPDSHRQNLGMPGMHGTVAAVAALQRSDLLIALGTRFDDRVTGKLDSFAPEAKVIHADIDPAEIGKNRHADVPIVGDVKAVITELIAMLRHHHIPGTIEMADWWAYLNGVRKTYPLSYGPQSDGSLSPEYVIEKLGEIAGPDAVFVAGVGQHQMWAAQFIRYEKPRSWLNSGGLGTMGFAIPAAMGAKIALPGTEVWAIDGDGCFQMTNQELATCAVEGIPVKVALINNGNLGMVRQWQSLFYAERYSQTDLATHSHRIPDFVKLAEALGCVGLRCEREEDVVDVINQARAINDCPVVIDFIVGADAQVWPMVAAGTSNDEIQAARGIRPLFDDITEGHA</sequence>
<accession>P9WG40</accession>
<accession>L0TCV7</accession>
<accession>O53250</accession>
<accession>P0A622</accession>
<organism>
    <name type="scientific">Mycobacterium tuberculosis (strain CDC 1551 / Oshkosh)</name>
    <dbReference type="NCBI Taxonomy" id="83331"/>
    <lineage>
        <taxon>Bacteria</taxon>
        <taxon>Bacillati</taxon>
        <taxon>Actinomycetota</taxon>
        <taxon>Actinomycetes</taxon>
        <taxon>Mycobacteriales</taxon>
        <taxon>Mycobacteriaceae</taxon>
        <taxon>Mycobacterium</taxon>
        <taxon>Mycobacterium tuberculosis complex</taxon>
    </lineage>
</organism>
<proteinExistence type="inferred from homology"/>
<keyword id="KW-0028">Amino-acid biosynthesis</keyword>
<keyword id="KW-0100">Branched-chain amino acid biosynthesis</keyword>
<keyword id="KW-0274">FAD</keyword>
<keyword id="KW-0285">Flavoprotein</keyword>
<keyword id="KW-0460">Magnesium</keyword>
<keyword id="KW-0479">Metal-binding</keyword>
<keyword id="KW-1185">Reference proteome</keyword>
<keyword id="KW-0786">Thiamine pyrophosphate</keyword>
<keyword id="KW-0808">Transferase</keyword>
<protein>
    <recommendedName>
        <fullName>Acetolactate synthase large subunit IlvB1</fullName>
        <shortName>ALS</shortName>
        <ecNumber>2.2.1.6</ecNumber>
    </recommendedName>
    <alternativeName>
        <fullName>Acetohydroxy-acid synthase large subunit</fullName>
        <shortName>AHAS</shortName>
    </alternativeName>
</protein>
<gene>
    <name type="primary">ilvB1</name>
    <name type="ordered locus">MT3083</name>
</gene>
<comment type="function">
    <text evidence="1">Catalyzes the conversion of 2 pyruvate molecules into acetolactate in the first common step of the biosynthetic pathway of the branched-amino acids such as leucine, isoleucine, and valine. Also involved in condensing pyruvate and 2-ketobutyrate to form 2-aceto-2-hydroxybutyrate (By similarity).</text>
</comment>
<comment type="catalytic activity">
    <reaction>
        <text>2 pyruvate + H(+) = (2S)-2-acetolactate + CO2</text>
        <dbReference type="Rhea" id="RHEA:25249"/>
        <dbReference type="ChEBI" id="CHEBI:15361"/>
        <dbReference type="ChEBI" id="CHEBI:15378"/>
        <dbReference type="ChEBI" id="CHEBI:16526"/>
        <dbReference type="ChEBI" id="CHEBI:58476"/>
        <dbReference type="EC" id="2.2.1.6"/>
    </reaction>
</comment>
<comment type="cofactor">
    <cofactor evidence="1">
        <name>Mg(2+)</name>
        <dbReference type="ChEBI" id="CHEBI:18420"/>
    </cofactor>
    <text evidence="1">Binds 1 Mg(2+) ion per subunit.</text>
</comment>
<comment type="cofactor">
    <cofactor evidence="1">
        <name>thiamine diphosphate</name>
        <dbReference type="ChEBI" id="CHEBI:58937"/>
    </cofactor>
    <text evidence="1">Binds 1 thiamine pyrophosphate per subunit.</text>
</comment>
<comment type="pathway">
    <text>Amino-acid biosynthesis; L-isoleucine biosynthesis; L-isoleucine from 2-oxobutanoate: step 1/4.</text>
</comment>
<comment type="pathway">
    <text>Amino-acid biosynthesis; L-valine biosynthesis; L-valine from pyruvate: step 1/4.</text>
</comment>
<comment type="subunit">
    <text evidence="1">Heterodimer of large catalytic subunit and small regulatory subunit.</text>
</comment>
<comment type="similarity">
    <text evidence="3">Belongs to the TPP enzyme family.</text>
</comment>
<name>ILVB1_MYCTO</name>
<evidence type="ECO:0000250" key="1"/>
<evidence type="ECO:0000256" key="2">
    <source>
        <dbReference type="SAM" id="MobiDB-lite"/>
    </source>
</evidence>
<evidence type="ECO:0000305" key="3"/>
<reference key="1">
    <citation type="journal article" date="2002" name="J. Bacteriol.">
        <title>Whole-genome comparison of Mycobacterium tuberculosis clinical and laboratory strains.</title>
        <authorList>
            <person name="Fleischmann R.D."/>
            <person name="Alland D."/>
            <person name="Eisen J.A."/>
            <person name="Carpenter L."/>
            <person name="White O."/>
            <person name="Peterson J.D."/>
            <person name="DeBoy R.T."/>
            <person name="Dodson R.J."/>
            <person name="Gwinn M.L."/>
            <person name="Haft D.H."/>
            <person name="Hickey E.K."/>
            <person name="Kolonay J.F."/>
            <person name="Nelson W.C."/>
            <person name="Umayam L.A."/>
            <person name="Ermolaeva M.D."/>
            <person name="Salzberg S.L."/>
            <person name="Delcher A."/>
            <person name="Utterback T.R."/>
            <person name="Weidman J.F."/>
            <person name="Khouri H.M."/>
            <person name="Gill J."/>
            <person name="Mikula A."/>
            <person name="Bishai W."/>
            <person name="Jacobs W.R. Jr."/>
            <person name="Venter J.C."/>
            <person name="Fraser C.M."/>
        </authorList>
    </citation>
    <scope>NUCLEOTIDE SEQUENCE [LARGE SCALE GENOMIC DNA]</scope>
    <source>
        <strain>CDC 1551 / Oshkosh</strain>
    </source>
</reference>
<dbReference type="EC" id="2.2.1.6"/>
<dbReference type="EMBL" id="AE000516">
    <property type="protein sequence ID" value="AAK47412.1"/>
    <property type="molecule type" value="Genomic_DNA"/>
</dbReference>
<dbReference type="PIR" id="F70855">
    <property type="entry name" value="F70855"/>
</dbReference>
<dbReference type="RefSeq" id="WP_003415168.1">
    <property type="nucleotide sequence ID" value="NZ_KK341227.1"/>
</dbReference>
<dbReference type="RefSeq" id="WP_010924600.1">
    <property type="nucleotide sequence ID" value="NC_002755.2"/>
</dbReference>
<dbReference type="SMR" id="P9WG40"/>
<dbReference type="KEGG" id="mtc:MT3083"/>
<dbReference type="PATRIC" id="fig|83331.31.peg.3324"/>
<dbReference type="HOGENOM" id="CLU_013748_1_2_11"/>
<dbReference type="UniPathway" id="UPA00047">
    <property type="reaction ID" value="UER00055"/>
</dbReference>
<dbReference type="UniPathway" id="UPA00049">
    <property type="reaction ID" value="UER00059"/>
</dbReference>
<dbReference type="Proteomes" id="UP000001020">
    <property type="component" value="Chromosome"/>
</dbReference>
<dbReference type="GO" id="GO:0005948">
    <property type="term" value="C:acetolactate synthase complex"/>
    <property type="evidence" value="ECO:0007669"/>
    <property type="project" value="TreeGrafter"/>
</dbReference>
<dbReference type="GO" id="GO:0003984">
    <property type="term" value="F:acetolactate synthase activity"/>
    <property type="evidence" value="ECO:0007669"/>
    <property type="project" value="UniProtKB-EC"/>
</dbReference>
<dbReference type="GO" id="GO:0050660">
    <property type="term" value="F:flavin adenine dinucleotide binding"/>
    <property type="evidence" value="ECO:0007669"/>
    <property type="project" value="InterPro"/>
</dbReference>
<dbReference type="GO" id="GO:0000287">
    <property type="term" value="F:magnesium ion binding"/>
    <property type="evidence" value="ECO:0007669"/>
    <property type="project" value="InterPro"/>
</dbReference>
<dbReference type="GO" id="GO:0030976">
    <property type="term" value="F:thiamine pyrophosphate binding"/>
    <property type="evidence" value="ECO:0007669"/>
    <property type="project" value="InterPro"/>
</dbReference>
<dbReference type="GO" id="GO:0009097">
    <property type="term" value="P:isoleucine biosynthetic process"/>
    <property type="evidence" value="ECO:0007669"/>
    <property type="project" value="UniProtKB-UniPathway"/>
</dbReference>
<dbReference type="GO" id="GO:0009099">
    <property type="term" value="P:L-valine biosynthetic process"/>
    <property type="evidence" value="ECO:0007669"/>
    <property type="project" value="UniProtKB-UniPathway"/>
</dbReference>
<dbReference type="CDD" id="cd02015">
    <property type="entry name" value="TPP_AHAS"/>
    <property type="match status" value="1"/>
</dbReference>
<dbReference type="CDD" id="cd07035">
    <property type="entry name" value="TPP_PYR_POX_like"/>
    <property type="match status" value="1"/>
</dbReference>
<dbReference type="FunFam" id="3.40.50.1220:FF:000008">
    <property type="entry name" value="Acetolactate synthase"/>
    <property type="match status" value="1"/>
</dbReference>
<dbReference type="FunFam" id="3.40.50.970:FF:000007">
    <property type="entry name" value="Acetolactate synthase"/>
    <property type="match status" value="1"/>
</dbReference>
<dbReference type="FunFam" id="3.40.50.970:FF:000016">
    <property type="entry name" value="Acetolactate synthase"/>
    <property type="match status" value="1"/>
</dbReference>
<dbReference type="Gene3D" id="3.40.50.970">
    <property type="match status" value="2"/>
</dbReference>
<dbReference type="Gene3D" id="3.40.50.1220">
    <property type="entry name" value="TPP-binding domain"/>
    <property type="match status" value="1"/>
</dbReference>
<dbReference type="InterPro" id="IPR012846">
    <property type="entry name" value="Acetolactate_synth_lsu"/>
</dbReference>
<dbReference type="InterPro" id="IPR039368">
    <property type="entry name" value="AHAS_TPP"/>
</dbReference>
<dbReference type="InterPro" id="IPR029035">
    <property type="entry name" value="DHS-like_NAD/FAD-binding_dom"/>
</dbReference>
<dbReference type="InterPro" id="IPR029061">
    <property type="entry name" value="THDP-binding"/>
</dbReference>
<dbReference type="InterPro" id="IPR012000">
    <property type="entry name" value="Thiamin_PyroP_enz_cen_dom"/>
</dbReference>
<dbReference type="InterPro" id="IPR012001">
    <property type="entry name" value="Thiamin_PyroP_enz_TPP-bd_dom"/>
</dbReference>
<dbReference type="InterPro" id="IPR000399">
    <property type="entry name" value="TPP-bd_CS"/>
</dbReference>
<dbReference type="InterPro" id="IPR045229">
    <property type="entry name" value="TPP_enz"/>
</dbReference>
<dbReference type="InterPro" id="IPR011766">
    <property type="entry name" value="TPP_enzyme_TPP-bd"/>
</dbReference>
<dbReference type="NCBIfam" id="TIGR00118">
    <property type="entry name" value="acolac_lg"/>
    <property type="match status" value="1"/>
</dbReference>
<dbReference type="NCBIfam" id="NF005860">
    <property type="entry name" value="PRK07789.1"/>
    <property type="match status" value="1"/>
</dbReference>
<dbReference type="PANTHER" id="PTHR18968:SF13">
    <property type="entry name" value="ACETOLACTATE SYNTHASE CATALYTIC SUBUNIT, MITOCHONDRIAL"/>
    <property type="match status" value="1"/>
</dbReference>
<dbReference type="PANTHER" id="PTHR18968">
    <property type="entry name" value="THIAMINE PYROPHOSPHATE ENZYMES"/>
    <property type="match status" value="1"/>
</dbReference>
<dbReference type="Pfam" id="PF02775">
    <property type="entry name" value="TPP_enzyme_C"/>
    <property type="match status" value="1"/>
</dbReference>
<dbReference type="Pfam" id="PF00205">
    <property type="entry name" value="TPP_enzyme_M"/>
    <property type="match status" value="1"/>
</dbReference>
<dbReference type="Pfam" id="PF02776">
    <property type="entry name" value="TPP_enzyme_N"/>
    <property type="match status" value="1"/>
</dbReference>
<dbReference type="SUPFAM" id="SSF52467">
    <property type="entry name" value="DHS-like NAD/FAD-binding domain"/>
    <property type="match status" value="1"/>
</dbReference>
<dbReference type="SUPFAM" id="SSF52518">
    <property type="entry name" value="Thiamin diphosphate-binding fold (THDP-binding)"/>
    <property type="match status" value="2"/>
</dbReference>
<dbReference type="PROSITE" id="PS00187">
    <property type="entry name" value="TPP_ENZYMES"/>
    <property type="match status" value="1"/>
</dbReference>
<feature type="chain" id="PRO_0000428428" description="Acetolactate synthase large subunit IlvB1">
    <location>
        <begin position="1"/>
        <end position="618"/>
    </location>
</feature>
<feature type="region of interest" description="Disordered" evidence="2">
    <location>
        <begin position="1"/>
        <end position="30"/>
    </location>
</feature>
<feature type="region of interest" description="Thiamine pyrophosphate binding" evidence="1">
    <location>
        <begin position="429"/>
        <end position="509"/>
    </location>
</feature>
<feature type="binding site" evidence="1">
    <location>
        <position position="85"/>
    </location>
    <ligand>
        <name>thiamine diphosphate</name>
        <dbReference type="ChEBI" id="CHEBI:58937"/>
    </ligand>
</feature>
<feature type="binding site" evidence="1">
    <location>
        <position position="187"/>
    </location>
    <ligand>
        <name>FAD</name>
        <dbReference type="ChEBI" id="CHEBI:57692"/>
    </ligand>
</feature>
<feature type="binding site" evidence="1">
    <location>
        <begin position="293"/>
        <end position="314"/>
    </location>
    <ligand>
        <name>FAD</name>
        <dbReference type="ChEBI" id="CHEBI:57692"/>
    </ligand>
</feature>
<feature type="binding site" evidence="1">
    <location>
        <begin position="336"/>
        <end position="355"/>
    </location>
    <ligand>
        <name>FAD</name>
        <dbReference type="ChEBI" id="CHEBI:57692"/>
    </ligand>
</feature>
<feature type="binding site" evidence="1">
    <location>
        <position position="480"/>
    </location>
    <ligand>
        <name>Mg(2+)</name>
        <dbReference type="ChEBI" id="CHEBI:18420"/>
    </ligand>
</feature>
<feature type="binding site" evidence="1">
    <location>
        <position position="507"/>
    </location>
    <ligand>
        <name>Mg(2+)</name>
        <dbReference type="ChEBI" id="CHEBI:18420"/>
    </ligand>
</feature>